<keyword id="KW-0489">Methyltransferase</keyword>
<keyword id="KW-1185">Reference proteome</keyword>
<keyword id="KW-0949">S-adenosyl-L-methionine</keyword>
<keyword id="KW-0808">Transferase</keyword>
<keyword id="KW-0819">tRNA processing</keyword>
<feature type="chain" id="PRO_0000171410" description="tRNA (guanine-N(7)-)-methyltransferase">
    <location>
        <begin position="1"/>
        <end position="213"/>
    </location>
</feature>
<feature type="active site" evidence="1">
    <location>
        <position position="118"/>
    </location>
</feature>
<feature type="binding site" evidence="2">
    <location>
        <position position="40"/>
    </location>
    <ligand>
        <name>S-adenosyl-L-methionine</name>
        <dbReference type="ChEBI" id="CHEBI:59789"/>
    </ligand>
</feature>
<feature type="binding site" evidence="2">
    <location>
        <position position="65"/>
    </location>
    <ligand>
        <name>S-adenosyl-L-methionine</name>
        <dbReference type="ChEBI" id="CHEBI:59789"/>
    </ligand>
</feature>
<feature type="binding site" evidence="2">
    <location>
        <position position="92"/>
    </location>
    <ligand>
        <name>S-adenosyl-L-methionine</name>
        <dbReference type="ChEBI" id="CHEBI:59789"/>
    </ligand>
</feature>
<feature type="binding site" evidence="2">
    <location>
        <position position="118"/>
    </location>
    <ligand>
        <name>S-adenosyl-L-methionine</name>
        <dbReference type="ChEBI" id="CHEBI:59789"/>
    </ligand>
</feature>
<feature type="binding site" evidence="2">
    <location>
        <position position="122"/>
    </location>
    <ligand>
        <name>substrate</name>
    </ligand>
</feature>
<feature type="binding site" evidence="2">
    <location>
        <position position="154"/>
    </location>
    <ligand>
        <name>substrate</name>
    </ligand>
</feature>
<feature type="sequence conflict" description="In Ref. 1; AAB08476." evidence="3" ref="1">
    <original>A</original>
    <variation>R</variation>
    <location>
        <position position="55"/>
    </location>
</feature>
<evidence type="ECO:0000250" key="1"/>
<evidence type="ECO:0000255" key="2">
    <source>
        <dbReference type="HAMAP-Rule" id="MF_01057"/>
    </source>
</evidence>
<evidence type="ECO:0000305" key="3"/>
<organism>
    <name type="scientific">Synechococcus elongatus (strain ATCC 33912 / PCC 7942 / FACHB-805)</name>
    <name type="common">Anacystis nidulans R2</name>
    <dbReference type="NCBI Taxonomy" id="1140"/>
    <lineage>
        <taxon>Bacteria</taxon>
        <taxon>Bacillati</taxon>
        <taxon>Cyanobacteriota</taxon>
        <taxon>Cyanophyceae</taxon>
        <taxon>Synechococcales</taxon>
        <taxon>Synechococcaceae</taxon>
        <taxon>Synechococcus</taxon>
    </lineage>
</organism>
<name>TRMB_SYNE7</name>
<gene>
    <name evidence="2" type="primary">trmB</name>
    <name type="synonym">dc13</name>
    <name type="ordered locus">Synpcc7942_0358</name>
</gene>
<reference key="1">
    <citation type="submission" date="1996-07" db="EMBL/GenBank/DDBJ databases">
        <title>Genomic region involved in ability of Synechococcus PCC 7942 to grow under low CO2 conditions.</title>
        <authorList>
            <person name="Bonfil D.J."/>
            <person name="Lieman-Hurwitz J."/>
            <person name="Ronen-Tarazi M."/>
            <person name="Kaplan A."/>
        </authorList>
    </citation>
    <scope>NUCLEOTIDE SEQUENCE [GENOMIC DNA]</scope>
</reference>
<reference key="2">
    <citation type="submission" date="2005-08" db="EMBL/GenBank/DDBJ databases">
        <title>Complete sequence of chromosome 1 of Synechococcus elongatus PCC 7942.</title>
        <authorList>
            <consortium name="US DOE Joint Genome Institute"/>
            <person name="Copeland A."/>
            <person name="Lucas S."/>
            <person name="Lapidus A."/>
            <person name="Barry K."/>
            <person name="Detter J.C."/>
            <person name="Glavina T."/>
            <person name="Hammon N."/>
            <person name="Israni S."/>
            <person name="Pitluck S."/>
            <person name="Schmutz J."/>
            <person name="Larimer F."/>
            <person name="Land M."/>
            <person name="Kyrpides N."/>
            <person name="Lykidis A."/>
            <person name="Golden S."/>
            <person name="Richardson P."/>
        </authorList>
    </citation>
    <scope>NUCLEOTIDE SEQUENCE [LARGE SCALE GENOMIC DNA]</scope>
    <source>
        <strain>ATCC 33912 / PCC 7942 / FACHB-805</strain>
    </source>
</reference>
<protein>
    <recommendedName>
        <fullName evidence="2">tRNA (guanine-N(7)-)-methyltransferase</fullName>
        <ecNumber evidence="2">2.1.1.33</ecNumber>
    </recommendedName>
    <alternativeName>
        <fullName evidence="2">tRNA (guanine(46)-N(7))-methyltransferase</fullName>
    </alternativeName>
    <alternativeName>
        <fullName evidence="2">tRNA(m7G46)-methyltransferase</fullName>
    </alternativeName>
</protein>
<comment type="function">
    <text evidence="2">Catalyzes the formation of N(7)-methylguanine at position 46 (m7G46) in tRNA.</text>
</comment>
<comment type="catalytic activity">
    <reaction evidence="2">
        <text>guanosine(46) in tRNA + S-adenosyl-L-methionine = N(7)-methylguanosine(46) in tRNA + S-adenosyl-L-homocysteine</text>
        <dbReference type="Rhea" id="RHEA:42708"/>
        <dbReference type="Rhea" id="RHEA-COMP:10188"/>
        <dbReference type="Rhea" id="RHEA-COMP:10189"/>
        <dbReference type="ChEBI" id="CHEBI:57856"/>
        <dbReference type="ChEBI" id="CHEBI:59789"/>
        <dbReference type="ChEBI" id="CHEBI:74269"/>
        <dbReference type="ChEBI" id="CHEBI:74480"/>
        <dbReference type="EC" id="2.1.1.33"/>
    </reaction>
</comment>
<comment type="pathway">
    <text evidence="2">tRNA modification; N(7)-methylguanine-tRNA biosynthesis.</text>
</comment>
<comment type="similarity">
    <text evidence="2">Belongs to the class I-like SAM-binding methyltransferase superfamily. TrmB family.</text>
</comment>
<accession>P72546</accession>
<accession>Q31RC9</accession>
<dbReference type="EC" id="2.1.1.33" evidence="2"/>
<dbReference type="EMBL" id="U62616">
    <property type="protein sequence ID" value="AAB08476.1"/>
    <property type="molecule type" value="Genomic_DNA"/>
</dbReference>
<dbReference type="EMBL" id="CP000100">
    <property type="protein sequence ID" value="ABB56390.1"/>
    <property type="molecule type" value="Genomic_DNA"/>
</dbReference>
<dbReference type="RefSeq" id="WP_011243467.1">
    <property type="nucleotide sequence ID" value="NZ_JACJTX010000002.1"/>
</dbReference>
<dbReference type="SMR" id="P72546"/>
<dbReference type="STRING" id="1140.Synpcc7942_0358"/>
<dbReference type="PaxDb" id="1140-Synpcc7942_0358"/>
<dbReference type="GeneID" id="72429176"/>
<dbReference type="KEGG" id="syf:Synpcc7942_0358"/>
<dbReference type="eggNOG" id="COG0220">
    <property type="taxonomic scope" value="Bacteria"/>
</dbReference>
<dbReference type="HOGENOM" id="CLU_050910_1_3_3"/>
<dbReference type="OrthoDB" id="9802090at2"/>
<dbReference type="BioCyc" id="SYNEL:SYNPCC7942_0358-MONOMER"/>
<dbReference type="UniPathway" id="UPA00989"/>
<dbReference type="Proteomes" id="UP000889800">
    <property type="component" value="Chromosome"/>
</dbReference>
<dbReference type="GO" id="GO:0043527">
    <property type="term" value="C:tRNA methyltransferase complex"/>
    <property type="evidence" value="ECO:0007669"/>
    <property type="project" value="TreeGrafter"/>
</dbReference>
<dbReference type="GO" id="GO:0008176">
    <property type="term" value="F:tRNA (guanine(46)-N7)-methyltransferase activity"/>
    <property type="evidence" value="ECO:0007669"/>
    <property type="project" value="UniProtKB-UniRule"/>
</dbReference>
<dbReference type="CDD" id="cd02440">
    <property type="entry name" value="AdoMet_MTases"/>
    <property type="match status" value="1"/>
</dbReference>
<dbReference type="Gene3D" id="3.40.50.150">
    <property type="entry name" value="Vaccinia Virus protein VP39"/>
    <property type="match status" value="1"/>
</dbReference>
<dbReference type="HAMAP" id="MF_01057">
    <property type="entry name" value="tRNA_methyltr_TrmB"/>
    <property type="match status" value="1"/>
</dbReference>
<dbReference type="InterPro" id="IPR029063">
    <property type="entry name" value="SAM-dependent_MTases_sf"/>
</dbReference>
<dbReference type="InterPro" id="IPR003358">
    <property type="entry name" value="tRNA_(Gua-N-7)_MeTrfase_Trmb"/>
</dbReference>
<dbReference type="InterPro" id="IPR055361">
    <property type="entry name" value="tRNA_methyltr_TrmB_bact"/>
</dbReference>
<dbReference type="NCBIfam" id="TIGR00091">
    <property type="entry name" value="tRNA (guanosine(46)-N7)-methyltransferase TrmB"/>
    <property type="match status" value="1"/>
</dbReference>
<dbReference type="PANTHER" id="PTHR23417">
    <property type="entry name" value="3-DEOXY-D-MANNO-OCTULOSONIC-ACID TRANSFERASE/TRNA GUANINE-N 7 - -METHYLTRANSFERASE"/>
    <property type="match status" value="1"/>
</dbReference>
<dbReference type="PANTHER" id="PTHR23417:SF21">
    <property type="entry name" value="TRNA (GUANINE-N(7)-)-METHYLTRANSFERASE"/>
    <property type="match status" value="1"/>
</dbReference>
<dbReference type="Pfam" id="PF02390">
    <property type="entry name" value="Methyltransf_4"/>
    <property type="match status" value="1"/>
</dbReference>
<dbReference type="SUPFAM" id="SSF53335">
    <property type="entry name" value="S-adenosyl-L-methionine-dependent methyltransferases"/>
    <property type="match status" value="1"/>
</dbReference>
<dbReference type="PROSITE" id="PS51625">
    <property type="entry name" value="SAM_MT_TRMB"/>
    <property type="match status" value="1"/>
</dbReference>
<sequence length="213" mass="24687">MARVRVRQHVNPLSQKFQVVTTWPDWQQVYADCDRPLHLDIGCARGRFLLAMATAQPEWNYLGLEIREPLVDEANAIARERELTNLYYHFSNANLDLEPLLRSLPTGILQRVSIQFPDPWFKKRHQKRRVVQPELVQALATALPAGAEVFLQSDVLEVQAEMCEHFAAEPRFQRTCLDWLPENPLPVPTEREIAVQNKQLPVYRALFIRQPAD</sequence>
<proteinExistence type="inferred from homology"/>